<gene>
    <name type="primary">epsH</name>
    <name type="synonym">yveR</name>
    <name type="ordered locus">BSU34300</name>
</gene>
<evidence type="ECO:0000269" key="1">
    <source>
    </source>
</evidence>
<evidence type="ECO:0000269" key="2">
    <source>
    </source>
</evidence>
<evidence type="ECO:0000269" key="3">
    <source>
    </source>
</evidence>
<evidence type="ECO:0000305" key="4"/>
<proteinExistence type="evidence at transcript level"/>
<comment type="function">
    <text evidence="1 2 3">May be involved in the production of the exopolysaccharide (EPS) component of the extracellular matrix during biofilm formation. EPS is responsible for the adhesion of chains of cells into bundles. Required for biofilm maintenance.</text>
</comment>
<comment type="induction">
    <text evidence="3">Repressed by SinR.</text>
</comment>
<comment type="similarity">
    <text evidence="4">Belongs to the glycosyltransferase 2 family.</text>
</comment>
<name>EPSH_BACSU</name>
<feature type="chain" id="PRO_0000360694" description="Putative glycosyltransferase EpsH">
    <location>
        <begin position="1"/>
        <end position="344"/>
    </location>
</feature>
<protein>
    <recommendedName>
        <fullName>Putative glycosyltransferase EpsH</fullName>
        <ecNumber>2.4.-.-</ecNumber>
    </recommendedName>
</protein>
<organism>
    <name type="scientific">Bacillus subtilis (strain 168)</name>
    <dbReference type="NCBI Taxonomy" id="224308"/>
    <lineage>
        <taxon>Bacteria</taxon>
        <taxon>Bacillati</taxon>
        <taxon>Bacillota</taxon>
        <taxon>Bacilli</taxon>
        <taxon>Bacillales</taxon>
        <taxon>Bacillaceae</taxon>
        <taxon>Bacillus</taxon>
    </lineage>
</organism>
<keyword id="KW-0270">Exopolysaccharide synthesis</keyword>
<keyword id="KW-0328">Glycosyltransferase</keyword>
<keyword id="KW-1185">Reference proteome</keyword>
<keyword id="KW-0808">Transferase</keyword>
<accession>P71057</accession>
<accession>O08176</accession>
<accession>Q795I6</accession>
<dbReference type="EC" id="2.4.-.-"/>
<dbReference type="EMBL" id="Z71928">
    <property type="protein sequence ID" value="CAA96475.1"/>
    <property type="molecule type" value="Genomic_DNA"/>
</dbReference>
<dbReference type="EMBL" id="Z94043">
    <property type="protein sequence ID" value="CAB08030.1"/>
    <property type="molecule type" value="Genomic_DNA"/>
</dbReference>
<dbReference type="EMBL" id="AL009126">
    <property type="protein sequence ID" value="CAB15435.1"/>
    <property type="molecule type" value="Genomic_DNA"/>
</dbReference>
<dbReference type="PIR" id="G70036">
    <property type="entry name" value="G70036"/>
</dbReference>
<dbReference type="RefSeq" id="NP_391310.1">
    <property type="nucleotide sequence ID" value="NC_000964.3"/>
</dbReference>
<dbReference type="RefSeq" id="WP_003243644.1">
    <property type="nucleotide sequence ID" value="NZ_OZ025638.1"/>
</dbReference>
<dbReference type="SMR" id="P71057"/>
<dbReference type="FunCoup" id="P71057">
    <property type="interactions" value="114"/>
</dbReference>
<dbReference type="STRING" id="224308.BSU34300"/>
<dbReference type="CAZy" id="GT2">
    <property type="family name" value="Glycosyltransferase Family 2"/>
</dbReference>
<dbReference type="PaxDb" id="224308-BSU34300"/>
<dbReference type="EnsemblBacteria" id="CAB15435">
    <property type="protein sequence ID" value="CAB15435"/>
    <property type="gene ID" value="BSU_34300"/>
</dbReference>
<dbReference type="GeneID" id="938630"/>
<dbReference type="KEGG" id="bsu:BSU34300"/>
<dbReference type="PATRIC" id="fig|224308.179.peg.3716"/>
<dbReference type="eggNOG" id="COG1216">
    <property type="taxonomic scope" value="Bacteria"/>
</dbReference>
<dbReference type="InParanoid" id="P71057"/>
<dbReference type="OrthoDB" id="396512at2"/>
<dbReference type="PhylomeDB" id="P71057"/>
<dbReference type="BioCyc" id="BSUB:BSU34300-MONOMER"/>
<dbReference type="Proteomes" id="UP000001570">
    <property type="component" value="Chromosome"/>
</dbReference>
<dbReference type="GO" id="GO:0016757">
    <property type="term" value="F:glycosyltransferase activity"/>
    <property type="evidence" value="ECO:0007669"/>
    <property type="project" value="UniProtKB-KW"/>
</dbReference>
<dbReference type="GO" id="GO:0000271">
    <property type="term" value="P:polysaccharide biosynthetic process"/>
    <property type="evidence" value="ECO:0007669"/>
    <property type="project" value="UniProtKB-KW"/>
</dbReference>
<dbReference type="CDD" id="cd00761">
    <property type="entry name" value="Glyco_tranf_GTA_type"/>
    <property type="match status" value="1"/>
</dbReference>
<dbReference type="Gene3D" id="3.90.550.10">
    <property type="entry name" value="Spore Coat Polysaccharide Biosynthesis Protein SpsA, Chain A"/>
    <property type="match status" value="1"/>
</dbReference>
<dbReference type="InterPro" id="IPR001173">
    <property type="entry name" value="Glyco_trans_2-like"/>
</dbReference>
<dbReference type="InterPro" id="IPR029044">
    <property type="entry name" value="Nucleotide-diphossugar_trans"/>
</dbReference>
<dbReference type="PANTHER" id="PTHR22916">
    <property type="entry name" value="GLYCOSYLTRANSFERASE"/>
    <property type="match status" value="1"/>
</dbReference>
<dbReference type="PANTHER" id="PTHR22916:SF51">
    <property type="entry name" value="GLYCOSYLTRANSFERASE EPSH-RELATED"/>
    <property type="match status" value="1"/>
</dbReference>
<dbReference type="Pfam" id="PF00535">
    <property type="entry name" value="Glycos_transf_2"/>
    <property type="match status" value="1"/>
</dbReference>
<dbReference type="SUPFAM" id="SSF53448">
    <property type="entry name" value="Nucleotide-diphospho-sugar transferases"/>
    <property type="match status" value="1"/>
</dbReference>
<reference key="1">
    <citation type="journal article" date="1996" name="Microbiology">
        <title>Integrated mapping and sequencing of a 115 kb DNA fragment from Bacillus subtilis: sequence analysis of a 21 kb segment containing the sigL locus.</title>
        <authorList>
            <person name="Fabret C."/>
            <person name="Quentin Y."/>
            <person name="Chapal N."/>
            <person name="Guiseppi A."/>
            <person name="Haiech J."/>
            <person name="Denizot F."/>
        </authorList>
    </citation>
    <scope>NUCLEOTIDE SEQUENCE [GENOMIC DNA]</scope>
    <source>
        <strain>168trp</strain>
    </source>
</reference>
<reference key="2">
    <citation type="submission" date="1997-04" db="EMBL/GenBank/DDBJ databases">
        <authorList>
            <person name="Denizot F."/>
        </authorList>
    </citation>
    <scope>NUCLEOTIDE SEQUENCE [GENOMIC DNA]</scope>
</reference>
<reference key="3">
    <citation type="journal article" date="1997" name="Nature">
        <title>The complete genome sequence of the Gram-positive bacterium Bacillus subtilis.</title>
        <authorList>
            <person name="Kunst F."/>
            <person name="Ogasawara N."/>
            <person name="Moszer I."/>
            <person name="Albertini A.M."/>
            <person name="Alloni G."/>
            <person name="Azevedo V."/>
            <person name="Bertero M.G."/>
            <person name="Bessieres P."/>
            <person name="Bolotin A."/>
            <person name="Borchert S."/>
            <person name="Borriss R."/>
            <person name="Boursier L."/>
            <person name="Brans A."/>
            <person name="Braun M."/>
            <person name="Brignell S.C."/>
            <person name="Bron S."/>
            <person name="Brouillet S."/>
            <person name="Bruschi C.V."/>
            <person name="Caldwell B."/>
            <person name="Capuano V."/>
            <person name="Carter N.M."/>
            <person name="Choi S.-K."/>
            <person name="Codani J.-J."/>
            <person name="Connerton I.F."/>
            <person name="Cummings N.J."/>
            <person name="Daniel R.A."/>
            <person name="Denizot F."/>
            <person name="Devine K.M."/>
            <person name="Duesterhoeft A."/>
            <person name="Ehrlich S.D."/>
            <person name="Emmerson P.T."/>
            <person name="Entian K.-D."/>
            <person name="Errington J."/>
            <person name="Fabret C."/>
            <person name="Ferrari E."/>
            <person name="Foulger D."/>
            <person name="Fritz C."/>
            <person name="Fujita M."/>
            <person name="Fujita Y."/>
            <person name="Fuma S."/>
            <person name="Galizzi A."/>
            <person name="Galleron N."/>
            <person name="Ghim S.-Y."/>
            <person name="Glaser P."/>
            <person name="Goffeau A."/>
            <person name="Golightly E.J."/>
            <person name="Grandi G."/>
            <person name="Guiseppi G."/>
            <person name="Guy B.J."/>
            <person name="Haga K."/>
            <person name="Haiech J."/>
            <person name="Harwood C.R."/>
            <person name="Henaut A."/>
            <person name="Hilbert H."/>
            <person name="Holsappel S."/>
            <person name="Hosono S."/>
            <person name="Hullo M.-F."/>
            <person name="Itaya M."/>
            <person name="Jones L.-M."/>
            <person name="Joris B."/>
            <person name="Karamata D."/>
            <person name="Kasahara Y."/>
            <person name="Klaerr-Blanchard M."/>
            <person name="Klein C."/>
            <person name="Kobayashi Y."/>
            <person name="Koetter P."/>
            <person name="Koningstein G."/>
            <person name="Krogh S."/>
            <person name="Kumano M."/>
            <person name="Kurita K."/>
            <person name="Lapidus A."/>
            <person name="Lardinois S."/>
            <person name="Lauber J."/>
            <person name="Lazarevic V."/>
            <person name="Lee S.-M."/>
            <person name="Levine A."/>
            <person name="Liu H."/>
            <person name="Masuda S."/>
            <person name="Mauel C."/>
            <person name="Medigue C."/>
            <person name="Medina N."/>
            <person name="Mellado R.P."/>
            <person name="Mizuno M."/>
            <person name="Moestl D."/>
            <person name="Nakai S."/>
            <person name="Noback M."/>
            <person name="Noone D."/>
            <person name="O'Reilly M."/>
            <person name="Ogawa K."/>
            <person name="Ogiwara A."/>
            <person name="Oudega B."/>
            <person name="Park S.-H."/>
            <person name="Parro V."/>
            <person name="Pohl T.M."/>
            <person name="Portetelle D."/>
            <person name="Porwollik S."/>
            <person name="Prescott A.M."/>
            <person name="Presecan E."/>
            <person name="Pujic P."/>
            <person name="Purnelle B."/>
            <person name="Rapoport G."/>
            <person name="Rey M."/>
            <person name="Reynolds S."/>
            <person name="Rieger M."/>
            <person name="Rivolta C."/>
            <person name="Rocha E."/>
            <person name="Roche B."/>
            <person name="Rose M."/>
            <person name="Sadaie Y."/>
            <person name="Sato T."/>
            <person name="Scanlan E."/>
            <person name="Schleich S."/>
            <person name="Schroeter R."/>
            <person name="Scoffone F."/>
            <person name="Sekiguchi J."/>
            <person name="Sekowska A."/>
            <person name="Seror S.J."/>
            <person name="Serror P."/>
            <person name="Shin B.-S."/>
            <person name="Soldo B."/>
            <person name="Sorokin A."/>
            <person name="Tacconi E."/>
            <person name="Takagi T."/>
            <person name="Takahashi H."/>
            <person name="Takemaru K."/>
            <person name="Takeuchi M."/>
            <person name="Tamakoshi A."/>
            <person name="Tanaka T."/>
            <person name="Terpstra P."/>
            <person name="Tognoni A."/>
            <person name="Tosato V."/>
            <person name="Uchiyama S."/>
            <person name="Vandenbol M."/>
            <person name="Vannier F."/>
            <person name="Vassarotti A."/>
            <person name="Viari A."/>
            <person name="Wambutt R."/>
            <person name="Wedler E."/>
            <person name="Wedler H."/>
            <person name="Weitzenegger T."/>
            <person name="Winters P."/>
            <person name="Wipat A."/>
            <person name="Yamamoto H."/>
            <person name="Yamane K."/>
            <person name="Yasumoto K."/>
            <person name="Yata K."/>
            <person name="Yoshida K."/>
            <person name="Yoshikawa H.-F."/>
            <person name="Zumstein E."/>
            <person name="Yoshikawa H."/>
            <person name="Danchin A."/>
        </authorList>
    </citation>
    <scope>NUCLEOTIDE SEQUENCE [LARGE SCALE GENOMIC DNA]</scope>
    <source>
        <strain>168</strain>
    </source>
</reference>
<reference key="4">
    <citation type="journal article" date="2004" name="Biotechnol. Bioeng.">
        <title>Gene expression in Bacillus subtilis surface biofilms with and without sporulation and the importance of yveR for biofilm maintenance.</title>
        <authorList>
            <person name="Ren D."/>
            <person name="Bedzyk L.A."/>
            <person name="Setlow P."/>
            <person name="Thomas S.M."/>
            <person name="Ye R.W."/>
            <person name="Wood T.K."/>
        </authorList>
    </citation>
    <scope>FUNCTION</scope>
</reference>
<reference key="5">
    <citation type="journal article" date="2004" name="J. Bacteriol.">
        <title>Genes involved in formation of structured multicellular communities by Bacillus subtilis.</title>
        <authorList>
            <person name="Branda S.S."/>
            <person name="Gonzalez-Pastor J.E."/>
            <person name="Dervyn E."/>
            <person name="Ehrlich S.D."/>
            <person name="Losick R."/>
            <person name="Kolter R."/>
        </authorList>
    </citation>
    <scope>FUNCTION</scope>
</reference>
<reference key="6">
    <citation type="journal article" date="2005" name="Mol. Microbiol.">
        <title>A master regulator for biofilm formation by Bacillus subtilis.</title>
        <authorList>
            <person name="Kearns D.B."/>
            <person name="Chu F."/>
            <person name="Branda S.S."/>
            <person name="Kolter R."/>
            <person name="Losick R."/>
        </authorList>
    </citation>
    <scope>FUNCTION</scope>
    <scope>INDUCTION</scope>
    <scope>NOMENCLATURE</scope>
</reference>
<sequence length="344" mass="39809">METPAVSLLVAVYNTETYIRTCLESLRNQTMDNIEIIIVNDGSADASPDIAEEYAKMDNRFKVIHQENQGLGAVRNKGIEAARGEFIAFIDSDDWIEPDYCEQMLRTAGDETDLVICNYAAEFEDTGKTMDSDIAQTYQDQPKEHYIKALFEGKVRGFSWNKLYRRSMIEAHRLSFPLRGELEHVEDQFFSFRAHFFARSVSYVKTPLYHYRIHLSSIVQRYQKKLFESGLALYETNAAFLQENNKLEEYRKELDTFIVLHSSICMLNEWKTSGSRRLFEKLRNVGVICADPVFQESLSKTGTAPFDAKRSCLLLMAKYRMIPFVAMASAVYQRVIEYKMRNRG</sequence>